<proteinExistence type="inferred from homology"/>
<organism>
    <name type="scientific">Schizosaccharomyces pombe (strain 972 / ATCC 24843)</name>
    <name type="common">Fission yeast</name>
    <dbReference type="NCBI Taxonomy" id="284812"/>
    <lineage>
        <taxon>Eukaryota</taxon>
        <taxon>Fungi</taxon>
        <taxon>Dikarya</taxon>
        <taxon>Ascomycota</taxon>
        <taxon>Taphrinomycotina</taxon>
        <taxon>Schizosaccharomycetes</taxon>
        <taxon>Schizosaccharomycetales</taxon>
        <taxon>Schizosaccharomycetaceae</taxon>
        <taxon>Schizosaccharomyces</taxon>
    </lineage>
</organism>
<feature type="transit peptide" description="Mitochondrion" evidence="4">
    <location>
        <begin position="1"/>
        <end position="28"/>
    </location>
</feature>
<feature type="chain" id="PRO_0000093469" description="Iron-sulfur clusters transporter atm1, mitochondrial">
    <location>
        <begin position="29"/>
        <end position="693"/>
    </location>
</feature>
<feature type="topological domain" description="Mitochondrial matrix" evidence="1">
    <location>
        <begin position="29"/>
        <end position="118"/>
    </location>
</feature>
<feature type="transmembrane region" description="Helical" evidence="6">
    <location>
        <begin position="119"/>
        <end position="140"/>
    </location>
</feature>
<feature type="topological domain" description="Mitochondrial intermembrane" evidence="1">
    <location>
        <begin position="141"/>
        <end position="163"/>
    </location>
</feature>
<feature type="transmembrane region" description="Helical" evidence="6">
    <location>
        <begin position="164"/>
        <end position="187"/>
    </location>
</feature>
<feature type="topological domain" description="Mitochondrial matrix" evidence="1">
    <location>
        <begin position="188"/>
        <end position="236"/>
    </location>
</feature>
<feature type="transmembrane region" description="Helical" evidence="6">
    <location>
        <begin position="237"/>
        <end position="260"/>
    </location>
</feature>
<feature type="topological domain" description="Mitochondrial intermembrane" evidence="1">
    <location>
        <position position="261"/>
    </location>
</feature>
<feature type="transmembrane region" description="Helical" evidence="6">
    <location>
        <begin position="262"/>
        <end position="282"/>
    </location>
</feature>
<feature type="topological domain" description="Mitochondrial matrix" evidence="1">
    <location>
        <begin position="283"/>
        <end position="348"/>
    </location>
</feature>
<feature type="transmembrane region" description="Helical" evidence="6">
    <location>
        <begin position="349"/>
        <end position="367"/>
    </location>
</feature>
<feature type="topological domain" description="Mitochondrial intermembrane" evidence="1">
    <location>
        <begin position="368"/>
        <end position="382"/>
    </location>
</feature>
<feature type="transmembrane region" description="Helical" evidence="6">
    <location>
        <begin position="383"/>
        <end position="404"/>
    </location>
</feature>
<feature type="topological domain" description="Mitochondrial matrix" evidence="1">
    <location>
        <begin position="405"/>
        <end position="693"/>
    </location>
</feature>
<feature type="domain" description="ABC transmembrane type-1" evidence="6">
    <location>
        <begin position="119"/>
        <end position="409"/>
    </location>
</feature>
<feature type="domain" description="ABC transporter" evidence="5">
    <location>
        <begin position="443"/>
        <end position="679"/>
    </location>
</feature>
<feature type="binding site" evidence="1">
    <location>
        <begin position="288"/>
        <end position="292"/>
    </location>
    <ligand>
        <name>glutathione</name>
        <dbReference type="ChEBI" id="CHEBI:57925"/>
    </ligand>
</feature>
<feature type="binding site" evidence="1">
    <location>
        <begin position="351"/>
        <end position="354"/>
    </location>
    <ligand>
        <name>glutathione</name>
        <dbReference type="ChEBI" id="CHEBI:57925"/>
    </ligand>
</feature>
<feature type="binding site" evidence="1">
    <location>
        <position position="401"/>
    </location>
    <ligand>
        <name>glutathione</name>
        <dbReference type="ChEBI" id="CHEBI:57925"/>
    </ligand>
</feature>
<feature type="binding site" evidence="3">
    <location>
        <position position="452"/>
    </location>
    <ligand>
        <name>ATP</name>
        <dbReference type="ChEBI" id="CHEBI:30616"/>
    </ligand>
</feature>
<feature type="binding site" evidence="5">
    <location>
        <begin position="476"/>
        <end position="487"/>
    </location>
    <ligand>
        <name>ATP</name>
        <dbReference type="ChEBI" id="CHEBI:30616"/>
    </ligand>
</feature>
<evidence type="ECO:0000250" key="1">
    <source>
        <dbReference type="UniProtKB" id="P40416"/>
    </source>
</evidence>
<evidence type="ECO:0000250" key="2">
    <source>
        <dbReference type="UniProtKB" id="Q2G506"/>
    </source>
</evidence>
<evidence type="ECO:0000250" key="3">
    <source>
        <dbReference type="UniProtKB" id="Q9NP58"/>
    </source>
</evidence>
<evidence type="ECO:0000255" key="4"/>
<evidence type="ECO:0000255" key="5">
    <source>
        <dbReference type="PROSITE-ProRule" id="PRU00434"/>
    </source>
</evidence>
<evidence type="ECO:0000255" key="6">
    <source>
        <dbReference type="PROSITE-ProRule" id="PRU00441"/>
    </source>
</evidence>
<evidence type="ECO:0000269" key="7">
    <source>
    </source>
</evidence>
<evidence type="ECO:0000269" key="8">
    <source>
    </source>
</evidence>
<evidence type="ECO:0000305" key="9"/>
<evidence type="ECO:0000312" key="10">
    <source>
        <dbReference type="PomBase" id="SPAC15A10.01"/>
    </source>
</evidence>
<keyword id="KW-0067">ATP-binding</keyword>
<keyword id="KW-0472">Membrane</keyword>
<keyword id="KW-0496">Mitochondrion</keyword>
<keyword id="KW-0999">Mitochondrion inner membrane</keyword>
<keyword id="KW-0547">Nucleotide-binding</keyword>
<keyword id="KW-1185">Reference proteome</keyword>
<keyword id="KW-0809">Transit peptide</keyword>
<keyword id="KW-1278">Translocase</keyword>
<keyword id="KW-0812">Transmembrane</keyword>
<keyword id="KW-1133">Transmembrane helix</keyword>
<keyword id="KW-0813">Transport</keyword>
<name>ATM1_SCHPO</name>
<protein>
    <recommendedName>
        <fullName evidence="9">Iron-sulfur clusters transporter atm1, mitochondrial</fullName>
        <ecNumber evidence="2">7.-.-.-</ecNumber>
    </recommendedName>
</protein>
<sequence length="693" mass="77056">MLERCPWKLISSPRNIPARSFLNSRGTYLVLRKSNILPLQHILRFSNFASKQCFPLRNGNNSASKALWNNKSKEKEPLNTSVKLASDVPDDKNVTGQMIVKDMLQYIWPKGKTNLKVRVVSALALLVAAKILNVQVPFYFKSIIDTMNTTLVQEVGALWSTVGAVVLGYGFARIFSTVFQELRNSVFAIVSQSAIRSVSSNVYQHLLNLDMNFHLSKQTGSITRAMDRGTKGISFILSSMVLHIIPITLEIAMVSGILTYKYGPSFSAIAATTVALYALFTVRTTSWRTVFRRQANAADSKASAAAIESLINYEAVKTFNNESYEMSRYEKHLSAYEKANVKVASSLAFLNSGQAIIFSTALTLMMYMGCRGIVTSNLTVGDLVMINQLVFQLSIPLNFLGSVYREMRQAFTDMEQLFSLKRINIQVKEAPDARDLVLKGGSIQFDNVHFSYNPNRPILNGCSFNIPAGAKVAFVGASGCGKSTILRLLFRFYDTDSGKILIDNQRLDQITLNSLRKAIGVVPQDTPLFNDTILYNIGYGNPKASNDEIVEAAKKAKIHDIIESFPEGYQTKVGERGLMISGGEKQRLAVSRLLLKNPEILFFDEATSALDTNTERALLRNINDLIKGSHKTSVFIAHRLRTIKDCDIIFVLEKGRVVEQGSHEQLMAKNSVYTSMWHSQESPFGESNKSGDA</sequence>
<accession>O14286</accession>
<accession>O13721</accession>
<dbReference type="EC" id="7.-.-.-" evidence="2"/>
<dbReference type="EMBL" id="CU329670">
    <property type="protein sequence ID" value="CAB16305.1"/>
    <property type="molecule type" value="Genomic_DNA"/>
</dbReference>
<dbReference type="PIR" id="T39154">
    <property type="entry name" value="T39154"/>
</dbReference>
<dbReference type="RefSeq" id="NP_594288.2">
    <property type="nucleotide sequence ID" value="NM_001019711.2"/>
</dbReference>
<dbReference type="SMR" id="O14286"/>
<dbReference type="BioGRID" id="279228">
    <property type="interactions" value="1"/>
</dbReference>
<dbReference type="FunCoup" id="O14286">
    <property type="interactions" value="397"/>
</dbReference>
<dbReference type="STRING" id="284812.O14286"/>
<dbReference type="PaxDb" id="4896-SPAC15A10.01.1"/>
<dbReference type="EnsemblFungi" id="SPAC15A10.01.1">
    <property type="protein sequence ID" value="SPAC15A10.01.1:pep"/>
    <property type="gene ID" value="SPAC15A10.01"/>
</dbReference>
<dbReference type="GeneID" id="2542779"/>
<dbReference type="KEGG" id="spo:2542779"/>
<dbReference type="PomBase" id="SPAC15A10.01">
    <property type="gene designation" value="atm1"/>
</dbReference>
<dbReference type="VEuPathDB" id="FungiDB:SPAC15A10.01"/>
<dbReference type="eggNOG" id="KOG0057">
    <property type="taxonomic scope" value="Eukaryota"/>
</dbReference>
<dbReference type="HOGENOM" id="CLU_000604_84_1_1"/>
<dbReference type="InParanoid" id="O14286"/>
<dbReference type="OMA" id="VFHIIPI"/>
<dbReference type="PhylomeDB" id="O14286"/>
<dbReference type="Reactome" id="R-SPO-1369007">
    <property type="pathway name" value="Mitochondrial ABC transporters"/>
</dbReference>
<dbReference type="PRO" id="PR:O14286"/>
<dbReference type="Proteomes" id="UP000002485">
    <property type="component" value="Chromosome I"/>
</dbReference>
<dbReference type="GO" id="GO:0005743">
    <property type="term" value="C:mitochondrial inner membrane"/>
    <property type="evidence" value="ECO:0000318"/>
    <property type="project" value="GO_Central"/>
</dbReference>
<dbReference type="GO" id="GO:0005739">
    <property type="term" value="C:mitochondrion"/>
    <property type="evidence" value="ECO:0000314"/>
    <property type="project" value="PomBase"/>
</dbReference>
<dbReference type="GO" id="GO:0140481">
    <property type="term" value="F:ABC-type iron-sulfur cluster transporter activity"/>
    <property type="evidence" value="ECO:0000304"/>
    <property type="project" value="PomBase"/>
</dbReference>
<dbReference type="GO" id="GO:0005524">
    <property type="term" value="F:ATP binding"/>
    <property type="evidence" value="ECO:0000255"/>
    <property type="project" value="PomBase"/>
</dbReference>
<dbReference type="GO" id="GO:0016887">
    <property type="term" value="F:ATP hydrolysis activity"/>
    <property type="evidence" value="ECO:0007669"/>
    <property type="project" value="InterPro"/>
</dbReference>
<dbReference type="GO" id="GO:0042626">
    <property type="term" value="F:ATPase-coupled transmembrane transporter activity"/>
    <property type="evidence" value="ECO:0000318"/>
    <property type="project" value="GO_Central"/>
</dbReference>
<dbReference type="GO" id="GO:0006879">
    <property type="term" value="P:intracellular iron ion homeostasis"/>
    <property type="evidence" value="ECO:0000318"/>
    <property type="project" value="GO_Central"/>
</dbReference>
<dbReference type="GO" id="GO:0016226">
    <property type="term" value="P:iron-sulfur cluster assembly"/>
    <property type="evidence" value="ECO:0000266"/>
    <property type="project" value="PomBase"/>
</dbReference>
<dbReference type="GO" id="GO:0140466">
    <property type="term" value="P:iron-sulfur cluster export from the mitochondrion"/>
    <property type="evidence" value="ECO:0000304"/>
    <property type="project" value="PomBase"/>
</dbReference>
<dbReference type="GO" id="GO:0055085">
    <property type="term" value="P:transmembrane transport"/>
    <property type="evidence" value="ECO:0000318"/>
    <property type="project" value="GO_Central"/>
</dbReference>
<dbReference type="CDD" id="cd18582">
    <property type="entry name" value="ABC_6TM_ATM1_ABCB7"/>
    <property type="match status" value="1"/>
</dbReference>
<dbReference type="CDD" id="cd03253">
    <property type="entry name" value="ABCC_ATM1_transporter"/>
    <property type="match status" value="1"/>
</dbReference>
<dbReference type="FunFam" id="1.20.1560.10:FF:000004">
    <property type="entry name" value="ATP-binding cassette sub-family B member 7"/>
    <property type="match status" value="1"/>
</dbReference>
<dbReference type="FunFam" id="3.40.50.300:FF:000186">
    <property type="entry name" value="ATP-binding cassette sub-family B member 7, mitochondrial"/>
    <property type="match status" value="1"/>
</dbReference>
<dbReference type="Gene3D" id="1.20.1560.10">
    <property type="entry name" value="ABC transporter type 1, transmembrane domain"/>
    <property type="match status" value="1"/>
</dbReference>
<dbReference type="Gene3D" id="3.40.50.300">
    <property type="entry name" value="P-loop containing nucleotide triphosphate hydrolases"/>
    <property type="match status" value="1"/>
</dbReference>
<dbReference type="InterPro" id="IPR003593">
    <property type="entry name" value="AAA+_ATPase"/>
</dbReference>
<dbReference type="InterPro" id="IPR011527">
    <property type="entry name" value="ABC1_TM_dom"/>
</dbReference>
<dbReference type="InterPro" id="IPR036640">
    <property type="entry name" value="ABC1_TM_sf"/>
</dbReference>
<dbReference type="InterPro" id="IPR003439">
    <property type="entry name" value="ABC_transporter-like_ATP-bd"/>
</dbReference>
<dbReference type="InterPro" id="IPR017871">
    <property type="entry name" value="ABC_transporter-like_CS"/>
</dbReference>
<dbReference type="InterPro" id="IPR027417">
    <property type="entry name" value="P-loop_NTPase"/>
</dbReference>
<dbReference type="InterPro" id="IPR039421">
    <property type="entry name" value="Type_1_exporter"/>
</dbReference>
<dbReference type="PANTHER" id="PTHR24221">
    <property type="entry name" value="ATP-BINDING CASSETTE SUB-FAMILY B"/>
    <property type="match status" value="1"/>
</dbReference>
<dbReference type="PANTHER" id="PTHR24221:SF402">
    <property type="entry name" value="IRON-SULFUR CLUSTERS TRANSPORTER ABCB7, MITOCHONDRIAL"/>
    <property type="match status" value="1"/>
</dbReference>
<dbReference type="Pfam" id="PF00664">
    <property type="entry name" value="ABC_membrane"/>
    <property type="match status" value="1"/>
</dbReference>
<dbReference type="Pfam" id="PF00005">
    <property type="entry name" value="ABC_tran"/>
    <property type="match status" value="1"/>
</dbReference>
<dbReference type="SMART" id="SM00382">
    <property type="entry name" value="AAA"/>
    <property type="match status" value="1"/>
</dbReference>
<dbReference type="SUPFAM" id="SSF90123">
    <property type="entry name" value="ABC transporter transmembrane region"/>
    <property type="match status" value="1"/>
</dbReference>
<dbReference type="SUPFAM" id="SSF52540">
    <property type="entry name" value="P-loop containing nucleoside triphosphate hydrolases"/>
    <property type="match status" value="1"/>
</dbReference>
<dbReference type="PROSITE" id="PS50929">
    <property type="entry name" value="ABC_TM1F"/>
    <property type="match status" value="1"/>
</dbReference>
<dbReference type="PROSITE" id="PS00211">
    <property type="entry name" value="ABC_TRANSPORTER_1"/>
    <property type="match status" value="1"/>
</dbReference>
<dbReference type="PROSITE" id="PS50893">
    <property type="entry name" value="ABC_TRANSPORTER_2"/>
    <property type="match status" value="1"/>
</dbReference>
<gene>
    <name evidence="10" type="primary">atm1</name>
    <name type="ORF">SPAC15A10.01</name>
    <name type="ORF">SPAC8C9.18</name>
</gene>
<reference key="1">
    <citation type="journal article" date="2002" name="Nature">
        <title>The genome sequence of Schizosaccharomyces pombe.</title>
        <authorList>
            <person name="Wood V."/>
            <person name="Gwilliam R."/>
            <person name="Rajandream M.A."/>
            <person name="Lyne M.H."/>
            <person name="Lyne R."/>
            <person name="Stewart A."/>
            <person name="Sgouros J.G."/>
            <person name="Peat N."/>
            <person name="Hayles J."/>
            <person name="Baker S.G."/>
            <person name="Basham D."/>
            <person name="Bowman S."/>
            <person name="Brooks K."/>
            <person name="Brown D."/>
            <person name="Brown S."/>
            <person name="Chillingworth T."/>
            <person name="Churcher C.M."/>
            <person name="Collins M."/>
            <person name="Connor R."/>
            <person name="Cronin A."/>
            <person name="Davis P."/>
            <person name="Feltwell T."/>
            <person name="Fraser A."/>
            <person name="Gentles S."/>
            <person name="Goble A."/>
            <person name="Hamlin N."/>
            <person name="Harris D.E."/>
            <person name="Hidalgo J."/>
            <person name="Hodgson G."/>
            <person name="Holroyd S."/>
            <person name="Hornsby T."/>
            <person name="Howarth S."/>
            <person name="Huckle E.J."/>
            <person name="Hunt S."/>
            <person name="Jagels K."/>
            <person name="James K.D."/>
            <person name="Jones L."/>
            <person name="Jones M."/>
            <person name="Leather S."/>
            <person name="McDonald S."/>
            <person name="McLean J."/>
            <person name="Mooney P."/>
            <person name="Moule S."/>
            <person name="Mungall K.L."/>
            <person name="Murphy L.D."/>
            <person name="Niblett D."/>
            <person name="Odell C."/>
            <person name="Oliver K."/>
            <person name="O'Neil S."/>
            <person name="Pearson D."/>
            <person name="Quail M.A."/>
            <person name="Rabbinowitsch E."/>
            <person name="Rutherford K.M."/>
            <person name="Rutter S."/>
            <person name="Saunders D."/>
            <person name="Seeger K."/>
            <person name="Sharp S."/>
            <person name="Skelton J."/>
            <person name="Simmonds M.N."/>
            <person name="Squares R."/>
            <person name="Squares S."/>
            <person name="Stevens K."/>
            <person name="Taylor K."/>
            <person name="Taylor R.G."/>
            <person name="Tivey A."/>
            <person name="Walsh S.V."/>
            <person name="Warren T."/>
            <person name="Whitehead S."/>
            <person name="Woodward J.R."/>
            <person name="Volckaert G."/>
            <person name="Aert R."/>
            <person name="Robben J."/>
            <person name="Grymonprez B."/>
            <person name="Weltjens I."/>
            <person name="Vanstreels E."/>
            <person name="Rieger M."/>
            <person name="Schaefer M."/>
            <person name="Mueller-Auer S."/>
            <person name="Gabel C."/>
            <person name="Fuchs M."/>
            <person name="Duesterhoeft A."/>
            <person name="Fritzc C."/>
            <person name="Holzer E."/>
            <person name="Moestl D."/>
            <person name="Hilbert H."/>
            <person name="Borzym K."/>
            <person name="Langer I."/>
            <person name="Beck A."/>
            <person name="Lehrach H."/>
            <person name="Reinhardt R."/>
            <person name="Pohl T.M."/>
            <person name="Eger P."/>
            <person name="Zimmermann W."/>
            <person name="Wedler H."/>
            <person name="Wambutt R."/>
            <person name="Purnelle B."/>
            <person name="Goffeau A."/>
            <person name="Cadieu E."/>
            <person name="Dreano S."/>
            <person name="Gloux S."/>
            <person name="Lelaure V."/>
            <person name="Mottier S."/>
            <person name="Galibert F."/>
            <person name="Aves S.J."/>
            <person name="Xiang Z."/>
            <person name="Hunt C."/>
            <person name="Moore K."/>
            <person name="Hurst S.M."/>
            <person name="Lucas M."/>
            <person name="Rochet M."/>
            <person name="Gaillardin C."/>
            <person name="Tallada V.A."/>
            <person name="Garzon A."/>
            <person name="Thode G."/>
            <person name="Daga R.R."/>
            <person name="Cruzado L."/>
            <person name="Jimenez J."/>
            <person name="Sanchez M."/>
            <person name="del Rey F."/>
            <person name="Benito J."/>
            <person name="Dominguez A."/>
            <person name="Revuelta J.L."/>
            <person name="Moreno S."/>
            <person name="Armstrong J."/>
            <person name="Forsburg S.L."/>
            <person name="Cerutti L."/>
            <person name="Lowe T."/>
            <person name="McCombie W.R."/>
            <person name="Paulsen I."/>
            <person name="Potashkin J."/>
            <person name="Shpakovski G.V."/>
            <person name="Ussery D."/>
            <person name="Barrell B.G."/>
            <person name="Nurse P."/>
        </authorList>
    </citation>
    <scope>NUCLEOTIDE SEQUENCE [LARGE SCALE GENOMIC DNA]</scope>
    <source>
        <strain>972 / ATCC 24843</strain>
    </source>
</reference>
<reference key="2">
    <citation type="journal article" date="2005" name="Biosci. Biotechnol. Biochem.">
        <title>Mitochondrial ABC transporter Atm1p is required for protection against oxidative stress and vacuolar functions in Schizosaccharomyces pombe.</title>
        <authorList>
            <person name="Iwaki T."/>
            <person name="Fujita Y."/>
            <person name="Tanaka N."/>
            <person name="Giga-Hama Y."/>
            <person name="Takegawa K."/>
        </authorList>
    </citation>
    <scope>FUNCTION</scope>
    <scope>SUBCELLULAR LOCATION</scope>
    <scope>DISRUPTION PHENOTYPE</scope>
</reference>
<reference key="3">
    <citation type="journal article" date="2006" name="Nat. Biotechnol.">
        <title>ORFeome cloning and global analysis of protein localization in the fission yeast Schizosaccharomyces pombe.</title>
        <authorList>
            <person name="Matsuyama A."/>
            <person name="Arai R."/>
            <person name="Yashiroda Y."/>
            <person name="Shirai A."/>
            <person name="Kamata A."/>
            <person name="Sekido S."/>
            <person name="Kobayashi Y."/>
            <person name="Hashimoto A."/>
            <person name="Hamamoto M."/>
            <person name="Hiraoka Y."/>
            <person name="Horinouchi S."/>
            <person name="Yoshida M."/>
        </authorList>
    </citation>
    <scope>SUBCELLULAR LOCATION [LARGE SCALE ANALYSIS]</scope>
</reference>
<comment type="function">
    <text evidence="1 7">Performs an essential function in the generation of cytoplasmic iron-sulfur proteins by mediating the ATP-dependent export of Fe/S cluster precursors synthesized by nfs1 and other mitochondrial proteins (PubMed:16306692). Hydrolyzes ATP (By similarity). Binds glutathione and may function by transporting a glutathione-conjugated iron-sulfur compound (By similarity).</text>
</comment>
<comment type="subunit">
    <text evidence="1">Homodimer.</text>
</comment>
<comment type="subcellular location">
    <subcellularLocation>
        <location evidence="7 8">Mitochondrion inner membrane</location>
        <topology evidence="6 7 8">Multi-pass membrane protein</topology>
    </subcellularLocation>
</comment>
<comment type="disruption phenotype">
    <text evidence="7">Abnormal mitochondrial function; decreases growth on glycerol (non-fermentable carbon source) (PubMed:16306692). Abnormal endocytosis and vacuole fusion (PubMed:16306692). Sensitive to copper, and dithiothreitol (PubMed:16306692).</text>
</comment>
<comment type="similarity">
    <text evidence="9">Belongs to the ABC transporter superfamily. ABCB family. Heavy Metal importer (TC 3.A.1.210) subfamily.</text>
</comment>